<comment type="subcellular location">
    <subcellularLocation>
        <location evidence="1">Cytoplasm</location>
        <location evidence="1">Cytoskeleton</location>
    </subcellularLocation>
    <subcellularLocation>
        <location evidence="1">Nucleus</location>
    </subcellularLocation>
    <text>Localizes at the barrier septum.</text>
</comment>
<comment type="similarity">
    <text evidence="2">Belongs to the actin family. ARP10 subfamily.</text>
</comment>
<dbReference type="EMBL" id="CU329671">
    <property type="protein sequence ID" value="CAA18882.1"/>
    <property type="molecule type" value="Genomic_DNA"/>
</dbReference>
<dbReference type="PIR" id="T40541">
    <property type="entry name" value="T40541"/>
</dbReference>
<dbReference type="RefSeq" id="NP_596714.1">
    <property type="nucleotide sequence ID" value="NM_001022639.2"/>
</dbReference>
<dbReference type="SMR" id="O60054"/>
<dbReference type="BioGRID" id="277380">
    <property type="interactions" value="15"/>
</dbReference>
<dbReference type="STRING" id="284812.O60054"/>
<dbReference type="PaxDb" id="4896-SPBC56F2.03.1"/>
<dbReference type="EnsemblFungi" id="SPBC56F2.03.1">
    <property type="protein sequence ID" value="SPBC56F2.03.1:pep"/>
    <property type="gene ID" value="SPBC56F2.03"/>
</dbReference>
<dbReference type="GeneID" id="2540863"/>
<dbReference type="KEGG" id="spo:2540863"/>
<dbReference type="PomBase" id="SPBC56F2.03">
    <property type="gene designation" value="arp10"/>
</dbReference>
<dbReference type="VEuPathDB" id="FungiDB:SPBC56F2.03"/>
<dbReference type="eggNOG" id="ENOG502RS0F">
    <property type="taxonomic scope" value="Eukaryota"/>
</dbReference>
<dbReference type="HOGENOM" id="CLU_727923_0_0_1"/>
<dbReference type="InParanoid" id="O60054"/>
<dbReference type="OMA" id="VIDIGWY"/>
<dbReference type="Reactome" id="R-SPO-114608">
    <property type="pathway name" value="Platelet degranulation"/>
</dbReference>
<dbReference type="Reactome" id="R-SPO-2029482">
    <property type="pathway name" value="Regulation of actin dynamics for phagocytic cup formation"/>
</dbReference>
<dbReference type="Reactome" id="R-SPO-5626467">
    <property type="pathway name" value="RHO GTPases activate IQGAPs"/>
</dbReference>
<dbReference type="Reactome" id="R-SPO-5663213">
    <property type="pathway name" value="RHO GTPases Activate WASPs and WAVEs"/>
</dbReference>
<dbReference type="Reactome" id="R-SPO-8856828">
    <property type="pathway name" value="Clathrin-mediated endocytosis"/>
</dbReference>
<dbReference type="PRO" id="PR:O60054"/>
<dbReference type="Proteomes" id="UP000002485">
    <property type="component" value="Chromosome II"/>
</dbReference>
<dbReference type="GO" id="GO:0032153">
    <property type="term" value="C:cell division site"/>
    <property type="evidence" value="ECO:0007005"/>
    <property type="project" value="PomBase"/>
</dbReference>
<dbReference type="GO" id="GO:0005829">
    <property type="term" value="C:cytosol"/>
    <property type="evidence" value="ECO:0007005"/>
    <property type="project" value="PomBase"/>
</dbReference>
<dbReference type="GO" id="GO:0005869">
    <property type="term" value="C:dynactin complex"/>
    <property type="evidence" value="ECO:0000318"/>
    <property type="project" value="GO_Central"/>
</dbReference>
<dbReference type="GO" id="GO:0044732">
    <property type="term" value="C:mitotic spindle pole body"/>
    <property type="evidence" value="ECO:0007005"/>
    <property type="project" value="PomBase"/>
</dbReference>
<dbReference type="GO" id="GO:0005634">
    <property type="term" value="C:nucleus"/>
    <property type="evidence" value="ECO:0007005"/>
    <property type="project" value="PomBase"/>
</dbReference>
<dbReference type="GO" id="GO:0030989">
    <property type="term" value="P:dynein-driven meiotic oscillatory nuclear movement"/>
    <property type="evidence" value="ECO:0000305"/>
    <property type="project" value="PomBase"/>
</dbReference>
<dbReference type="GO" id="GO:0007018">
    <property type="term" value="P:microtubule-based movement"/>
    <property type="evidence" value="ECO:0000318"/>
    <property type="project" value="GO_Central"/>
</dbReference>
<dbReference type="Gene3D" id="3.30.420.40">
    <property type="match status" value="2"/>
</dbReference>
<dbReference type="Gene3D" id="3.90.640.10">
    <property type="entry name" value="Actin, Chain A, domain 4"/>
    <property type="match status" value="1"/>
</dbReference>
<dbReference type="InterPro" id="IPR004000">
    <property type="entry name" value="Actin"/>
</dbReference>
<dbReference type="InterPro" id="IPR043129">
    <property type="entry name" value="ATPase_NBD"/>
</dbReference>
<dbReference type="PANTHER" id="PTHR11937">
    <property type="entry name" value="ACTIN"/>
    <property type="match status" value="1"/>
</dbReference>
<dbReference type="Pfam" id="PF00022">
    <property type="entry name" value="Actin"/>
    <property type="match status" value="1"/>
</dbReference>
<dbReference type="SUPFAM" id="SSF53067">
    <property type="entry name" value="Actin-like ATPase domain"/>
    <property type="match status" value="1"/>
</dbReference>
<evidence type="ECO:0000269" key="1">
    <source>
    </source>
</evidence>
<evidence type="ECO:0000305" key="2"/>
<protein>
    <recommendedName>
        <fullName>Actin-like protein arp10</fullName>
    </recommendedName>
</protein>
<reference key="1">
    <citation type="journal article" date="2002" name="Nature">
        <title>The genome sequence of Schizosaccharomyces pombe.</title>
        <authorList>
            <person name="Wood V."/>
            <person name="Gwilliam R."/>
            <person name="Rajandream M.A."/>
            <person name="Lyne M.H."/>
            <person name="Lyne R."/>
            <person name="Stewart A."/>
            <person name="Sgouros J.G."/>
            <person name="Peat N."/>
            <person name="Hayles J."/>
            <person name="Baker S.G."/>
            <person name="Basham D."/>
            <person name="Bowman S."/>
            <person name="Brooks K."/>
            <person name="Brown D."/>
            <person name="Brown S."/>
            <person name="Chillingworth T."/>
            <person name="Churcher C.M."/>
            <person name="Collins M."/>
            <person name="Connor R."/>
            <person name="Cronin A."/>
            <person name="Davis P."/>
            <person name="Feltwell T."/>
            <person name="Fraser A."/>
            <person name="Gentles S."/>
            <person name="Goble A."/>
            <person name="Hamlin N."/>
            <person name="Harris D.E."/>
            <person name="Hidalgo J."/>
            <person name="Hodgson G."/>
            <person name="Holroyd S."/>
            <person name="Hornsby T."/>
            <person name="Howarth S."/>
            <person name="Huckle E.J."/>
            <person name="Hunt S."/>
            <person name="Jagels K."/>
            <person name="James K.D."/>
            <person name="Jones L."/>
            <person name="Jones M."/>
            <person name="Leather S."/>
            <person name="McDonald S."/>
            <person name="McLean J."/>
            <person name="Mooney P."/>
            <person name="Moule S."/>
            <person name="Mungall K.L."/>
            <person name="Murphy L.D."/>
            <person name="Niblett D."/>
            <person name="Odell C."/>
            <person name="Oliver K."/>
            <person name="O'Neil S."/>
            <person name="Pearson D."/>
            <person name="Quail M.A."/>
            <person name="Rabbinowitsch E."/>
            <person name="Rutherford K.M."/>
            <person name="Rutter S."/>
            <person name="Saunders D."/>
            <person name="Seeger K."/>
            <person name="Sharp S."/>
            <person name="Skelton J."/>
            <person name="Simmonds M.N."/>
            <person name="Squares R."/>
            <person name="Squares S."/>
            <person name="Stevens K."/>
            <person name="Taylor K."/>
            <person name="Taylor R.G."/>
            <person name="Tivey A."/>
            <person name="Walsh S.V."/>
            <person name="Warren T."/>
            <person name="Whitehead S."/>
            <person name="Woodward J.R."/>
            <person name="Volckaert G."/>
            <person name="Aert R."/>
            <person name="Robben J."/>
            <person name="Grymonprez B."/>
            <person name="Weltjens I."/>
            <person name="Vanstreels E."/>
            <person name="Rieger M."/>
            <person name="Schaefer M."/>
            <person name="Mueller-Auer S."/>
            <person name="Gabel C."/>
            <person name="Fuchs M."/>
            <person name="Duesterhoeft A."/>
            <person name="Fritzc C."/>
            <person name="Holzer E."/>
            <person name="Moestl D."/>
            <person name="Hilbert H."/>
            <person name="Borzym K."/>
            <person name="Langer I."/>
            <person name="Beck A."/>
            <person name="Lehrach H."/>
            <person name="Reinhardt R."/>
            <person name="Pohl T.M."/>
            <person name="Eger P."/>
            <person name="Zimmermann W."/>
            <person name="Wedler H."/>
            <person name="Wambutt R."/>
            <person name="Purnelle B."/>
            <person name="Goffeau A."/>
            <person name="Cadieu E."/>
            <person name="Dreano S."/>
            <person name="Gloux S."/>
            <person name="Lelaure V."/>
            <person name="Mottier S."/>
            <person name="Galibert F."/>
            <person name="Aves S.J."/>
            <person name="Xiang Z."/>
            <person name="Hunt C."/>
            <person name="Moore K."/>
            <person name="Hurst S.M."/>
            <person name="Lucas M."/>
            <person name="Rochet M."/>
            <person name="Gaillardin C."/>
            <person name="Tallada V.A."/>
            <person name="Garzon A."/>
            <person name="Thode G."/>
            <person name="Daga R.R."/>
            <person name="Cruzado L."/>
            <person name="Jimenez J."/>
            <person name="Sanchez M."/>
            <person name="del Rey F."/>
            <person name="Benito J."/>
            <person name="Dominguez A."/>
            <person name="Revuelta J.L."/>
            <person name="Moreno S."/>
            <person name="Armstrong J."/>
            <person name="Forsburg S.L."/>
            <person name="Cerutti L."/>
            <person name="Lowe T."/>
            <person name="McCombie W.R."/>
            <person name="Paulsen I."/>
            <person name="Potashkin J."/>
            <person name="Shpakovski G.V."/>
            <person name="Ussery D."/>
            <person name="Barrell B.G."/>
            <person name="Nurse P."/>
        </authorList>
    </citation>
    <scope>NUCLEOTIDE SEQUENCE [LARGE SCALE GENOMIC DNA]</scope>
    <source>
        <strain>972 / ATCC 24843</strain>
    </source>
</reference>
<reference key="2">
    <citation type="journal article" date="2006" name="Nat. Biotechnol.">
        <title>ORFeome cloning and global analysis of protein localization in the fission yeast Schizosaccharomyces pombe.</title>
        <authorList>
            <person name="Matsuyama A."/>
            <person name="Arai R."/>
            <person name="Yashiroda Y."/>
            <person name="Shirai A."/>
            <person name="Kamata A."/>
            <person name="Sekido S."/>
            <person name="Kobayashi Y."/>
            <person name="Hashimoto A."/>
            <person name="Hamamoto M."/>
            <person name="Hiraoka Y."/>
            <person name="Horinouchi S."/>
            <person name="Yoshida M."/>
        </authorList>
    </citation>
    <scope>SUBCELLULAR LOCATION [LARGE SCALE ANALYSIS]</scope>
</reference>
<accession>O60054</accession>
<proteinExistence type="inferred from homology"/>
<organism>
    <name type="scientific">Schizosaccharomyces pombe (strain 972 / ATCC 24843)</name>
    <name type="common">Fission yeast</name>
    <dbReference type="NCBI Taxonomy" id="284812"/>
    <lineage>
        <taxon>Eukaryota</taxon>
        <taxon>Fungi</taxon>
        <taxon>Dikarya</taxon>
        <taxon>Ascomycota</taxon>
        <taxon>Taphrinomycotina</taxon>
        <taxon>Schizosaccharomycetes</taxon>
        <taxon>Schizosaccharomycetales</taxon>
        <taxon>Schizosaccharomycetaceae</taxon>
        <taxon>Schizosaccharomyces</taxon>
    </lineage>
</organism>
<gene>
    <name type="primary">arp10</name>
    <name type="ORF">SPBC56F2.03</name>
</gene>
<feature type="chain" id="PRO_0000339114" description="Actin-like protein arp10">
    <location>
        <begin position="1"/>
        <end position="380"/>
    </location>
</feature>
<keyword id="KW-0963">Cytoplasm</keyword>
<keyword id="KW-0206">Cytoskeleton</keyword>
<keyword id="KW-0539">Nucleus</keyword>
<keyword id="KW-1185">Reference proteome</keyword>
<name>ARP10_SCHPO</name>
<sequence length="380" mass="43015">MRKNCDISTVVVQIDEFGIYIGNASDKEPTWKVDLVPYKQSWVPISIVTTIIQRYCLNTFNCLAEIVRVVLVLDIFVTRKQKKELCDGLFNTLNVPITLWICAPLTAILSTSTRDAIIVDIGMKETKFIVILDLCILMHYTKTSKRSLSTVLERMADCFKLNNKKNSQKLLEDEEFAVTEALMKSLLKSRVPSKPTEELYQLTDQEAYFRYSDILPLAETTCQTNKTERGSSFNDAEKIRVPSWIANAGIEALFEGSDAGGSDIADQALPNVLLSLYRILPIDIRRIMSKLIVFNGILPSLPGWYQRFQNEMTSRGLAIKAVPGQTTADMMAWNGASTTCESQLDYDPDDPKHLRHSIVESPLLYGQDQYFNGENAPEWW</sequence>